<comment type="function">
    <text evidence="2">Multifunctional triterpene synthase producing germanicol, beta-amyrin and lupeol in the ratio 63:33:4.</text>
</comment>
<comment type="catalytic activity">
    <reaction evidence="2">
        <text>(S)-2,3-epoxysqualene = germanicol</text>
        <dbReference type="Rhea" id="RHEA:31003"/>
        <dbReference type="ChEBI" id="CHEBI:15441"/>
        <dbReference type="ChEBI" id="CHEBI:62455"/>
        <dbReference type="EC" id="5.4.99.34"/>
    </reaction>
    <physiologicalReaction direction="left-to-right" evidence="5">
        <dbReference type="Rhea" id="RHEA:31004"/>
    </physiologicalReaction>
</comment>
<comment type="catalytic activity">
    <reaction evidence="2">
        <text>(S)-2,3-epoxysqualene = beta-amyrin</text>
        <dbReference type="Rhea" id="RHEA:31007"/>
        <dbReference type="ChEBI" id="CHEBI:10352"/>
        <dbReference type="ChEBI" id="CHEBI:15441"/>
    </reaction>
    <physiologicalReaction direction="left-to-right" evidence="5">
        <dbReference type="Rhea" id="RHEA:31008"/>
    </physiologicalReaction>
</comment>
<comment type="catalytic activity">
    <reaction evidence="2">
        <text>(S)-2,3-epoxysqualene = lupeol</text>
        <dbReference type="Rhea" id="RHEA:31383"/>
        <dbReference type="ChEBI" id="CHEBI:6570"/>
        <dbReference type="ChEBI" id="CHEBI:15441"/>
    </reaction>
    <physiologicalReaction direction="left-to-right" evidence="5">
        <dbReference type="Rhea" id="RHEA:31384"/>
    </physiologicalReaction>
</comment>
<comment type="pathway">
    <text evidence="5">Terpene metabolism.</text>
</comment>
<comment type="similarity">
    <text evidence="4">Belongs to the terpene cyclase/mutase family.</text>
</comment>
<protein>
    <recommendedName>
        <fullName evidence="5">Germanicol synthase</fullName>
        <ecNumber evidence="2">5.4.99.34</ecNumber>
    </recommendedName>
    <alternativeName>
        <fullName evidence="3">Oxidosqualene cyclase RsM1</fullName>
    </alternativeName>
</protein>
<dbReference type="EC" id="5.4.99.34" evidence="2"/>
<dbReference type="EMBL" id="AB263203">
    <property type="protein sequence ID" value="BAF80441.1"/>
    <property type="molecule type" value="mRNA"/>
</dbReference>
<dbReference type="SMR" id="A8C980"/>
<dbReference type="KEGG" id="ag:BAF80441"/>
<dbReference type="BioCyc" id="MetaCyc:MONOMER-14453"/>
<dbReference type="BRENDA" id="5.4.99.34">
    <property type="organism ID" value="5362"/>
</dbReference>
<dbReference type="GO" id="GO:0005811">
    <property type="term" value="C:lipid droplet"/>
    <property type="evidence" value="ECO:0007669"/>
    <property type="project" value="InterPro"/>
</dbReference>
<dbReference type="GO" id="GO:0042300">
    <property type="term" value="F:beta-amyrin synthase activity"/>
    <property type="evidence" value="ECO:0007669"/>
    <property type="project" value="RHEA"/>
</dbReference>
<dbReference type="GO" id="GO:0042299">
    <property type="term" value="F:lupeol synthase activity"/>
    <property type="evidence" value="ECO:0007669"/>
    <property type="project" value="RHEA"/>
</dbReference>
<dbReference type="GO" id="GO:0016104">
    <property type="term" value="P:triterpenoid biosynthetic process"/>
    <property type="evidence" value="ECO:0007669"/>
    <property type="project" value="InterPro"/>
</dbReference>
<dbReference type="CDD" id="cd02892">
    <property type="entry name" value="SQCY_1"/>
    <property type="match status" value="1"/>
</dbReference>
<dbReference type="FunFam" id="1.50.10.20:FF:000011">
    <property type="entry name" value="Terpene cyclase/mutase family member"/>
    <property type="match status" value="1"/>
</dbReference>
<dbReference type="FunFam" id="1.50.10.20:FF:000064">
    <property type="entry name" value="Uncharacterized protein"/>
    <property type="match status" value="1"/>
</dbReference>
<dbReference type="Gene3D" id="1.50.10.20">
    <property type="match status" value="2"/>
</dbReference>
<dbReference type="InterPro" id="IPR032696">
    <property type="entry name" value="SQ_cyclase_C"/>
</dbReference>
<dbReference type="InterPro" id="IPR032697">
    <property type="entry name" value="SQ_cyclase_N"/>
</dbReference>
<dbReference type="InterPro" id="IPR018333">
    <property type="entry name" value="Squalene_cyclase"/>
</dbReference>
<dbReference type="InterPro" id="IPR008930">
    <property type="entry name" value="Terpenoid_cyclase/PrenylTrfase"/>
</dbReference>
<dbReference type="NCBIfam" id="TIGR01787">
    <property type="entry name" value="squalene_cyclas"/>
    <property type="match status" value="1"/>
</dbReference>
<dbReference type="PANTHER" id="PTHR11764:SF58">
    <property type="entry name" value="BETA-AMYRIN SYNTHASE-RELATED"/>
    <property type="match status" value="1"/>
</dbReference>
<dbReference type="PANTHER" id="PTHR11764">
    <property type="entry name" value="TERPENE CYCLASE/MUTASE FAMILY MEMBER"/>
    <property type="match status" value="1"/>
</dbReference>
<dbReference type="Pfam" id="PF13243">
    <property type="entry name" value="SQHop_cyclase_C"/>
    <property type="match status" value="1"/>
</dbReference>
<dbReference type="Pfam" id="PF13249">
    <property type="entry name" value="SQHop_cyclase_N"/>
    <property type="match status" value="1"/>
</dbReference>
<dbReference type="SFLD" id="SFLDG01016">
    <property type="entry name" value="Prenyltransferase_Like_2"/>
    <property type="match status" value="1"/>
</dbReference>
<dbReference type="SUPFAM" id="SSF48239">
    <property type="entry name" value="Terpenoid cyclases/Protein prenyltransferases"/>
    <property type="match status" value="2"/>
</dbReference>
<reference key="1">
    <citation type="journal article" date="2007" name="FEBS J.">
        <title>Triterpene synthases from the Okinawan mangrove tribe, Rhizophoraceae.</title>
        <authorList>
            <person name="Basyuni M."/>
            <person name="Oku H."/>
            <person name="Tsujimoto E."/>
            <person name="Kinjo K."/>
            <person name="Baba S."/>
            <person name="Takara K."/>
        </authorList>
    </citation>
    <scope>NUCLEOTIDE SEQUENCE [MRNA]</scope>
    <scope>FUNCTION</scope>
    <scope>CATALYTIC ACTIVITY</scope>
    <source>
        <tissue>Leaf</tissue>
    </source>
</reference>
<evidence type="ECO:0000250" key="1">
    <source>
        <dbReference type="UniProtKB" id="P48449"/>
    </source>
</evidence>
<evidence type="ECO:0000269" key="2">
    <source>
    </source>
</evidence>
<evidence type="ECO:0000303" key="3">
    <source>
    </source>
</evidence>
<evidence type="ECO:0000305" key="4"/>
<evidence type="ECO:0000305" key="5">
    <source>
    </source>
</evidence>
<sequence>MWRLKIAEGGNDPYLYSTNNYVGRQIWEFDPDAGTPEERAKAEEARQNFYKNRYQVKPSGDLLWRLQFLREKNFKQTIPQVRIEEGEEITREKATTALRRAVQFFSALQASDGHWPAENAGPLFFLPPLVMCMCITGHLDTVFPAEHRKEILRYIYYHQNEDGGWGLHIEGHSTMFCTALNYICMRILGEGPNGGQDDACTRARKWIHDHGSVTNIPSWGKTWLSILGVYDWSGCNPMPPEFWMLPSFLPMHPAKMWCYCRMVYMPMSYLYGKRFVGLITPLIQQLREELFTQPYDQINWKKNCHQCAPEDLYYPHPFIQDLIWDCLYISMEPLLTRWPLNMIIRKKALELTMKHIHYEDGSSRYITIGCVEKVLCMLACWVEDPNGDYFKKHLARIPDYIWVAEDGMKMQSFGSQQWDTGFAIQALLATNLTDEIGGVLRRGHDFIKKSQVQDNPSGDFKSMYRHISKGSWTFSDQDHGWQVSDCTAEGLKCCLLFSMMPPEIVGEHMEPERLYDSVNVLLSLQSKNGGLSAWEPAGAQDWLELLNPTEFFADIVIEHEYVERTSSAIHALVLFKKLYPGHRKKEIEDFIAKSVRFLESIQTSDGTWYGNWGVCFTYGTWFALGGLAAAGKTYNSCLAMRKAVDFLLRIQKDDGGWGESYLSCPEKKYVPLEANHSNLVHTAWAMMALVHAGQMDRDPTPLHRAAKLMINSQLEDGDFPQQEITGVFNRNCMLHYAAYRNIYPLWALAEYCRRVPLPS</sequence>
<feature type="chain" id="PRO_0000412987" description="Germanicol synthase">
    <location>
        <begin position="1"/>
        <end position="759"/>
    </location>
</feature>
<feature type="active site" description="Proton donor" evidence="1">
    <location>
        <position position="485"/>
    </location>
</feature>
<organism>
    <name type="scientific">Rhizophora stylosa</name>
    <name type="common">Bakau</name>
    <name type="synonym">Red mangrove</name>
    <dbReference type="NCBI Taxonomy" id="98588"/>
    <lineage>
        <taxon>Eukaryota</taxon>
        <taxon>Viridiplantae</taxon>
        <taxon>Streptophyta</taxon>
        <taxon>Embryophyta</taxon>
        <taxon>Tracheophyta</taxon>
        <taxon>Spermatophyta</taxon>
        <taxon>Magnoliopsida</taxon>
        <taxon>eudicotyledons</taxon>
        <taxon>Gunneridae</taxon>
        <taxon>Pentapetalae</taxon>
        <taxon>rosids</taxon>
        <taxon>fabids</taxon>
        <taxon>Malpighiales</taxon>
        <taxon>Rhizophoraceae</taxon>
        <taxon>Rhizophora</taxon>
    </lineage>
</organism>
<name>GERS_RHISY</name>
<accession>A8C980</accession>
<gene>
    <name type="primary">M1</name>
</gene>
<proteinExistence type="evidence at protein level"/>
<keyword id="KW-0413">Isomerase</keyword>
<keyword id="KW-0677">Repeat</keyword>